<organismHost>
    <name type="scientific">Homo sapiens</name>
    <name type="common">Human</name>
    <dbReference type="NCBI Taxonomy" id="9606"/>
</organismHost>
<feature type="initiator methionine" description="Removed; by host" evidence="1">
    <location>
        <position position="1"/>
    </location>
</feature>
<feature type="chain" id="PRO_0000261248" description="Gag polyprotein">
    <location>
        <begin position="2"/>
        <end position="522"/>
    </location>
</feature>
<feature type="chain" id="PRO_0000038615" description="Matrix protein p17" evidence="1">
    <location>
        <begin position="2"/>
        <end position="135"/>
    </location>
</feature>
<feature type="chain" id="PRO_0000038616" description="Capsid protein p24" evidence="1">
    <location>
        <begin position="136"/>
        <end position="365"/>
    </location>
</feature>
<feature type="peptide" id="PRO_0000042091" description="Spacer peptide 1" evidence="1">
    <location>
        <begin position="366"/>
        <end position="382"/>
    </location>
</feature>
<feature type="chain" id="PRO_0000042092" description="Nucleocapsid protein p7" evidence="1">
    <location>
        <begin position="383"/>
        <end position="431"/>
    </location>
</feature>
<feature type="peptide" id="PRO_0000042093" description="Spacer peptide 2" evidence="1">
    <location>
        <begin position="432"/>
        <end position="445"/>
    </location>
</feature>
<feature type="chain" id="PRO_0000042094" description="p6-gag" evidence="1">
    <location>
        <begin position="446"/>
        <end position="522"/>
    </location>
</feature>
<feature type="zinc finger region" description="CCHC-type 1" evidence="9">
    <location>
        <begin position="389"/>
        <end position="406"/>
    </location>
</feature>
<feature type="zinc finger region" description="CCHC-type 2" evidence="9">
    <location>
        <begin position="410"/>
        <end position="427"/>
    </location>
</feature>
<feature type="region of interest" description="Interaction with Gp41" evidence="6">
    <location>
        <begin position="7"/>
        <end position="31"/>
    </location>
</feature>
<feature type="region of interest" description="Interaction with host CALM1" evidence="5">
    <location>
        <begin position="8"/>
        <end position="43"/>
    </location>
</feature>
<feature type="region of interest" description="Interaction with host AP3D1" evidence="7">
    <location>
        <begin position="12"/>
        <end position="19"/>
    </location>
</feature>
<feature type="region of interest" description="Interaction with membrane phosphatidylinositol 4,5-bisphosphate and RNA" evidence="6">
    <location>
        <begin position="14"/>
        <end position="33"/>
    </location>
</feature>
<feature type="region of interest" description="Interaction with membrane phosphatidylinositol 4,5-bisphosphate" evidence="6">
    <location>
        <begin position="73"/>
        <end position="77"/>
    </location>
</feature>
<feature type="region of interest" description="Disordered" evidence="10">
    <location>
        <begin position="111"/>
        <end position="136"/>
    </location>
</feature>
<feature type="region of interest" description="Interaction with host PPIA/CYPA and NUP153" evidence="6">
    <location>
        <begin position="191"/>
        <end position="228"/>
    </location>
</feature>
<feature type="region of interest" description="PPIA/CYPA-binding loop" evidence="5">
    <location>
        <begin position="219"/>
        <end position="226"/>
    </location>
</feature>
<feature type="region of interest" description="Dimerization/Multimerization of capsid protein p24" evidence="5">
    <location>
        <begin position="279"/>
        <end position="365"/>
    </location>
</feature>
<feature type="region of interest" description="Disordered" evidence="10">
    <location>
        <begin position="473"/>
        <end position="522"/>
    </location>
</feature>
<feature type="short sequence motif" description="Nuclear export signal" evidence="1">
    <location>
        <begin position="16"/>
        <end position="22"/>
    </location>
</feature>
<feature type="short sequence motif" description="Nuclear localization signal" evidence="1">
    <location>
        <begin position="26"/>
        <end position="32"/>
    </location>
</feature>
<feature type="short sequence motif" description="PTAP/PSAP motif">
    <location>
        <begin position="456"/>
        <end position="459"/>
    </location>
</feature>
<feature type="compositionally biased region" description="Polar residues" evidence="10">
    <location>
        <begin position="119"/>
        <end position="128"/>
    </location>
</feature>
<feature type="compositionally biased region" description="Basic and acidic residues" evidence="10">
    <location>
        <begin position="477"/>
        <end position="512"/>
    </location>
</feature>
<feature type="site" description="Cleavage; by viral protease" evidence="1">
    <location>
        <begin position="135"/>
        <end position="136"/>
    </location>
</feature>
<feature type="site" description="Cleavage; by viral protease" evidence="1">
    <location>
        <begin position="365"/>
        <end position="366"/>
    </location>
</feature>
<feature type="site" description="Cleavage; by viral protease" evidence="1">
    <location>
        <begin position="382"/>
        <end position="383"/>
    </location>
</feature>
<feature type="site" description="Cleavage; by viral protease" evidence="1">
    <location>
        <begin position="431"/>
        <end position="432"/>
    </location>
</feature>
<feature type="site" description="Cleavage; by viral protease" evidence="1">
    <location>
        <begin position="445"/>
        <end position="446"/>
    </location>
</feature>
<feature type="modified residue" description="Phosphoserine; by host MAPK1" evidence="6">
    <location>
        <position position="150"/>
    </location>
</feature>
<feature type="lipid moiety-binding region" description="N-myristoyl glycine; by host" evidence="1">
    <location>
        <position position="2"/>
    </location>
</feature>
<feature type="strand" evidence="12">
    <location>
        <begin position="137"/>
        <end position="140"/>
    </location>
</feature>
<feature type="strand" evidence="12">
    <location>
        <begin position="143"/>
        <end position="146"/>
    </location>
</feature>
<feature type="helix" evidence="12">
    <location>
        <begin position="151"/>
        <end position="164"/>
    </location>
</feature>
<feature type="helix" evidence="12">
    <location>
        <begin position="170"/>
        <end position="177"/>
    </location>
</feature>
<feature type="turn" evidence="12">
    <location>
        <begin position="178"/>
        <end position="180"/>
    </location>
</feature>
<feature type="helix" evidence="12">
    <location>
        <begin position="183"/>
        <end position="191"/>
    </location>
</feature>
<feature type="turn" evidence="12">
    <location>
        <begin position="192"/>
        <end position="195"/>
    </location>
</feature>
<feature type="helix" evidence="12">
    <location>
        <begin position="197"/>
        <end position="216"/>
    </location>
</feature>
<feature type="helix" evidence="12">
    <location>
        <begin position="234"/>
        <end position="237"/>
    </location>
</feature>
<feature type="helix" evidence="12">
    <location>
        <begin position="244"/>
        <end position="252"/>
    </location>
</feature>
<feature type="strand" evidence="12">
    <location>
        <begin position="254"/>
        <end position="256"/>
    </location>
</feature>
<feature type="helix" evidence="12">
    <location>
        <begin position="260"/>
        <end position="278"/>
    </location>
</feature>
<feature type="helix" evidence="13">
    <location>
        <begin position="283"/>
        <end position="286"/>
    </location>
</feature>
<feature type="helix" evidence="13">
    <location>
        <begin position="295"/>
        <end position="309"/>
    </location>
</feature>
<feature type="helix" evidence="13">
    <location>
        <begin position="313"/>
        <end position="321"/>
    </location>
</feature>
<feature type="helix" evidence="13">
    <location>
        <begin position="323"/>
        <end position="326"/>
    </location>
</feature>
<feature type="helix" evidence="13">
    <location>
        <begin position="330"/>
        <end position="337"/>
    </location>
</feature>
<feature type="helix" evidence="13">
    <location>
        <begin position="345"/>
        <end position="352"/>
    </location>
</feature>
<feature type="turn" evidence="13">
    <location>
        <begin position="353"/>
        <end position="356"/>
    </location>
</feature>
<feature type="helix" evidence="13">
    <location>
        <begin position="358"/>
        <end position="364"/>
    </location>
</feature>
<comment type="function">
    <molecule>Gag polyprotein</molecule>
    <text evidence="5">Mediates, with Gag-Pol polyprotein, the essential events in virion assembly, including binding the plasma membrane, making the protein-protein interactions necessary to create spherical particles, recruiting the viral Env proteins, and packaging the genomic RNA via direct interactions with the RNA packaging sequence (Psi).</text>
</comment>
<comment type="function">
    <molecule>Matrix protein p17</molecule>
    <text evidence="1 6">Targets the polyprotein to the plasma membrane via a multipartite membrane-binding signal, that includes its myristoylated N-terminus (By similarity). Matrix protein is part of the pre-integration complex. Implicated in the release from host cell mediated by Vpu. Binds to RNA (By similarity).</text>
</comment>
<comment type="function">
    <molecule>Capsid protein p24</molecule>
    <text evidence="5 6 8">Forms the conical core that encapsulates the genomic RNA-nucleocapsid complex in the virion (By similarity). Most core are conical, with only 7% tubular (By similarity). The core is constituted by capsid protein hexamer subunits (By similarity). The core is disassembled soon after virion entry (By similarity). Host restriction factors such as TRIM5-alpha or TRIMCyp bind retroviral capsids and cause premature capsid disassembly, leading to blocks in reverse transcription (By similarity). Capsid restriction by TRIM5 is one of the factors which restricts HIV-1 to the human species (By similarity). Host PIN1 apparently facilitates the virion uncoating (By similarity). On the other hand, interactions with PDZD8 or CYPA stabilize the capsid (By similarity). The capsid interacts with high affinity with human NONO, promoting detection of viral DNA by CGAS, leading to CGAS-mediated inmmune activation (By similarity).</text>
</comment>
<comment type="function">
    <molecule>Nucleocapsid protein p7</molecule>
    <text evidence="5">Encapsulates and protects viral dimeric unspliced genomic RNA (gRNA). Binds these RNAs through its zinc fingers. Acts as a nucleic acid chaperone which is involved in rearangement of nucleic acid secondary structure during gRNA retrotranscription. Also facilitates template switch leading to recombination. As part of the polyprotein, participates in gRNA dimerization, packaging, tRNA incorporation and virion assembly.</text>
</comment>
<comment type="function">
    <molecule>p6-gag</molecule>
    <text evidence="6">Plays a role in budding of the assembled particle by interacting with the host class E VPS proteins TSG101 and PDCD6IP/AIP1.</text>
</comment>
<comment type="subunit">
    <molecule>Gag polyprotein</molecule>
    <text evidence="4 5">Homotrimer; further assembles as hexamers of trimers. Oligomerization possibly creates a central hole into which the cytoplasmic tail of the gp41 envelope protein may be inserted. Interacts with host TRIM22; this interaction seems to disrupt proper trafficking of Gag polyprotein and may interfere with budding. Interacts with host PDZD8. When ubiquitinated, interacts (via p6-gag domain) with host PACSIN2; this interaction allows PACSIN2 recruitment to viral assembly sites and its subsequent incorporation into virions (By similarity).</text>
</comment>
<comment type="subunit">
    <molecule>Matrix protein p17</molecule>
    <text evidence="5 6">Homotrimer; further assembles as hexamers of trimers. Interacts with gp41 (via C-terminus). Interacts with host CALM1; this interaction induces a conformational change in the Matrix protein, triggering exposure of the myristate group. Interacts with host AP3D1; this interaction allows the polyprotein trafficking to multivesicular bodies during virus assembly. Part of the pre-integration complex (PIC) which is composed of viral genome, matrix protein, Vpr and integrase.</text>
</comment>
<comment type="subunit">
    <molecule>Capsid protein p24</molecule>
    <text evidence="5 6 8">Homodimer; the homodimer further multimerizes as homohexamers or homopentamers (By similarity). Interacts with host NUP98 (By similarity). Interacts with host PPIA/CYPA; this interaction stabilizes the capsid (By similarity). Interacts with host NUP153 (By similarity). Interacts with host PDZD8; this interaction stabilizes the capsid. Interacts with host TRIM5; this interaction destabilizes the capsid (By similarity). Interacts with host CPSF6 (By similarity). Interacts with host NONO; the interaction is the interaction is strong and promotes CGAS-mediated immunity (By similarity).</text>
</comment>
<comment type="subunit">
    <molecule>Nucleocapsid protein p7</molecule>
    <text evidence="6">Interacts with host NUP98.</text>
</comment>
<comment type="subunit">
    <molecule>p6-gag</molecule>
    <text evidence="3 6">Interacts with Vpr; this interaction allows Vpr incorporation into the virion. Interacts with host TSG101. p6-gag interacts with host PDCD6IP/AIP1.</text>
</comment>
<comment type="interaction">
    <interactant intactId="EBI-780156">
        <id>P04590</id>
    </interactant>
    <interactant intactId="EBI-395940">
        <id>Q13523</id>
        <label>PRP4K</label>
    </interactant>
    <organismsDiffer>true</organismsDiffer>
    <experiments>6</experiments>
</comment>
<comment type="subcellular location">
    <molecule>Gag polyprotein</molecule>
    <subcellularLocation>
        <location evidence="6">Host cell membrane</location>
        <topology evidence="6">Lipid-anchor</topology>
    </subcellularLocation>
    <subcellularLocation>
        <location evidence="6">Host endosome</location>
        <location evidence="6">Host multivesicular body</location>
    </subcellularLocation>
    <text evidence="6">These locations are probably linked to virus assembly sites. The main location is the cell membrane, but under some circumstances, late endosomal compartments can serve as productive sites for virion assembly.</text>
</comment>
<comment type="subcellular location">
    <molecule>Matrix protein p17</molecule>
    <subcellularLocation>
        <location evidence="6">Virion membrane</location>
        <topology evidence="6">Lipid-anchor</topology>
    </subcellularLocation>
    <subcellularLocation>
        <location evidence="1">Host nucleus</location>
    </subcellularLocation>
    <subcellularLocation>
        <location evidence="1">Host cytoplasm</location>
    </subcellularLocation>
</comment>
<comment type="subcellular location">
    <molecule>Capsid protein p24</molecule>
    <subcellularLocation>
        <location evidence="6">Virion</location>
    </subcellularLocation>
</comment>
<comment type="subcellular location">
    <molecule>Nucleocapsid protein p7</molecule>
    <subcellularLocation>
        <location evidence="6">Virion</location>
    </subcellularLocation>
</comment>
<comment type="alternative products">
    <event type="ribosomal frameshifting"/>
    <isoform>
        <id>P04590-1</id>
        <name>Gag polyprotein</name>
        <sequence type="displayed"/>
    </isoform>
    <isoform>
        <id>P04584-1</id>
        <name>Gag-Pol polyprotein</name>
        <sequence type="external"/>
    </isoform>
    <text>Translation results in the formation of the Gag polyprotein most of the time. Ribosomal frameshifting at the gag-pol genes boundary occurs at low frequency and produces the Gag-Pol polyprotein. This strategy of translation probably allows the virus to modulate the quantity of each viral protein. Maintenance of a correct Gag to Gag-Pol ratio is essential for RNA dimerization and viral infectivity.</text>
</comment>
<comment type="domain">
    <text evidence="1">Late-budding domains (L domains) are short sequence motifs essential for viral particle budding. They recruit proteins of the host ESCRT machinery (Endosomal Sorting Complex Required for Transport) or ESCRT-associated proteins. p6-gag contains one L domains: a PTAP/PSAP motif, which interacts with the UEV domain of TSG101 (By similarity).</text>
</comment>
<comment type="PTM">
    <text evidence="6">Gag-Pol polyprotein: Specific enzymatic cleavages by the viral protease yield mature proteins.</text>
</comment>
<comment type="PTM">
    <molecule>Matrix protein p17</molecule>
    <text evidence="5">Tyrosine phosphorylated presumably in the virion by a host kinase. Phosphorylation is apparently not a major regulator of membrane association.</text>
</comment>
<comment type="PTM">
    <text evidence="6">Capsid protein p24 is phosphorylated possibly by host MAPK1; this phosphorylation is necessary for Pin1-mediated virion uncoating.</text>
</comment>
<comment type="PTM">
    <text evidence="2">Nucleocapsid protein p7 is methylated by host PRMT6, impairing its function by reducing RNA annealing and the initiation of reverse transcription.</text>
</comment>
<comment type="miscellaneous">
    <molecule>Isoform Gag polyprotein</molecule>
    <text>Produced by conventional translation.</text>
</comment>
<comment type="similarity">
    <text evidence="11">Belongs to the primate lentivirus group gag polyprotein family.</text>
</comment>
<organism>
    <name type="scientific">Human immunodeficiency virus type 2 subtype A (isolate ROD)</name>
    <name type="common">HIV-2</name>
    <dbReference type="NCBI Taxonomy" id="11720"/>
    <lineage>
        <taxon>Viruses</taxon>
        <taxon>Riboviria</taxon>
        <taxon>Pararnavirae</taxon>
        <taxon>Artverviricota</taxon>
        <taxon>Revtraviricetes</taxon>
        <taxon>Ortervirales</taxon>
        <taxon>Retroviridae</taxon>
        <taxon>Orthoretrovirinae</taxon>
        <taxon>Lentivirus</taxon>
        <taxon>Human immunodeficiency virus 2</taxon>
    </lineage>
</organism>
<dbReference type="EMBL" id="M15390">
    <property type="protein sequence ID" value="AAB00763.1"/>
    <property type="molecule type" value="Genomic_DNA"/>
</dbReference>
<dbReference type="EMBL" id="X05291">
    <property type="protein sequence ID" value="CAA28909.1"/>
    <property type="molecule type" value="Genomic_RNA"/>
</dbReference>
<dbReference type="PIR" id="A26262">
    <property type="entry name" value="FOLJG2"/>
</dbReference>
<dbReference type="PDB" id="2WLV">
    <property type="method" value="X-ray"/>
    <property type="resolution" value="1.25 A"/>
    <property type="chains" value="A/B=136-279"/>
</dbReference>
<dbReference type="PDB" id="4DGB">
    <property type="method" value="X-ray"/>
    <property type="resolution" value="1.70 A"/>
    <property type="chains" value="B=221-226"/>
</dbReference>
<dbReference type="PDB" id="7TV2">
    <property type="method" value="X-ray"/>
    <property type="resolution" value="1.98 A"/>
    <property type="chains" value="A=280-365"/>
</dbReference>
<dbReference type="PDB" id="8FZC">
    <property type="method" value="EM"/>
    <property type="resolution" value="5.50 A"/>
    <property type="chains" value="A/B/C=150-373"/>
</dbReference>
<dbReference type="PDBsum" id="2WLV"/>
<dbReference type="PDBsum" id="4DGB"/>
<dbReference type="PDBsum" id="7TV2"/>
<dbReference type="PDBsum" id="8FZC"/>
<dbReference type="BMRB" id="P04590"/>
<dbReference type="EMDB" id="EMD-29607"/>
<dbReference type="SMR" id="P04590"/>
<dbReference type="IntAct" id="P04590">
    <property type="interactions" value="4"/>
</dbReference>
<dbReference type="EvolutionaryTrace" id="P04590"/>
<dbReference type="PRO" id="PR:P04590"/>
<dbReference type="Proteomes" id="UP000007426">
    <property type="component" value="Genome"/>
</dbReference>
<dbReference type="Proteomes" id="UP000246871">
    <property type="component" value="Segment"/>
</dbReference>
<dbReference type="GO" id="GO:0042025">
    <property type="term" value="C:host cell nucleus"/>
    <property type="evidence" value="ECO:0007669"/>
    <property type="project" value="UniProtKB-SubCell"/>
</dbReference>
<dbReference type="GO" id="GO:0020002">
    <property type="term" value="C:host cell plasma membrane"/>
    <property type="evidence" value="ECO:0007669"/>
    <property type="project" value="UniProtKB-SubCell"/>
</dbReference>
<dbReference type="GO" id="GO:0072494">
    <property type="term" value="C:host multivesicular body"/>
    <property type="evidence" value="ECO:0007669"/>
    <property type="project" value="UniProtKB-SubCell"/>
</dbReference>
<dbReference type="GO" id="GO:0016020">
    <property type="term" value="C:membrane"/>
    <property type="evidence" value="ECO:0007669"/>
    <property type="project" value="UniProtKB-KW"/>
</dbReference>
<dbReference type="GO" id="GO:0019013">
    <property type="term" value="C:viral nucleocapsid"/>
    <property type="evidence" value="ECO:0007669"/>
    <property type="project" value="UniProtKB-KW"/>
</dbReference>
<dbReference type="GO" id="GO:0055036">
    <property type="term" value="C:virion membrane"/>
    <property type="evidence" value="ECO:0007669"/>
    <property type="project" value="UniProtKB-SubCell"/>
</dbReference>
<dbReference type="GO" id="GO:0003723">
    <property type="term" value="F:RNA binding"/>
    <property type="evidence" value="ECO:0007669"/>
    <property type="project" value="UniProtKB-KW"/>
</dbReference>
<dbReference type="GO" id="GO:0005198">
    <property type="term" value="F:structural molecule activity"/>
    <property type="evidence" value="ECO:0007669"/>
    <property type="project" value="InterPro"/>
</dbReference>
<dbReference type="GO" id="GO:0008270">
    <property type="term" value="F:zinc ion binding"/>
    <property type="evidence" value="ECO:0007669"/>
    <property type="project" value="UniProtKB-KW"/>
</dbReference>
<dbReference type="GO" id="GO:0039702">
    <property type="term" value="P:viral budding via host ESCRT complex"/>
    <property type="evidence" value="ECO:0007669"/>
    <property type="project" value="UniProtKB-KW"/>
</dbReference>
<dbReference type="GO" id="GO:0075523">
    <property type="term" value="P:viral translational frameshifting"/>
    <property type="evidence" value="ECO:0007669"/>
    <property type="project" value="UniProtKB-KW"/>
</dbReference>
<dbReference type="Gene3D" id="1.10.1200.30">
    <property type="match status" value="1"/>
</dbReference>
<dbReference type="Gene3D" id="1.10.375.10">
    <property type="entry name" value="Human Immunodeficiency Virus Type 1 Capsid Protein"/>
    <property type="match status" value="1"/>
</dbReference>
<dbReference type="Gene3D" id="1.10.150.90">
    <property type="entry name" value="Immunodeficiency lentiviruses, gag gene matrix protein p17"/>
    <property type="match status" value="1"/>
</dbReference>
<dbReference type="Gene3D" id="1.20.5.760">
    <property type="entry name" value="Single helix bin"/>
    <property type="match status" value="1"/>
</dbReference>
<dbReference type="Gene3D" id="4.10.60.10">
    <property type="entry name" value="Zinc finger, CCHC-type"/>
    <property type="match status" value="1"/>
</dbReference>
<dbReference type="InterPro" id="IPR045345">
    <property type="entry name" value="Gag_p24_C"/>
</dbReference>
<dbReference type="InterPro" id="IPR000071">
    <property type="entry name" value="Lentvrl_matrix_N"/>
</dbReference>
<dbReference type="InterPro" id="IPR012344">
    <property type="entry name" value="Matrix_HIV/RSV_N"/>
</dbReference>
<dbReference type="InterPro" id="IPR050195">
    <property type="entry name" value="Primate_lentivir_Gag_pol-like"/>
</dbReference>
<dbReference type="InterPro" id="IPR008916">
    <property type="entry name" value="Retrov_capsid_C"/>
</dbReference>
<dbReference type="InterPro" id="IPR008919">
    <property type="entry name" value="Retrov_capsid_N"/>
</dbReference>
<dbReference type="InterPro" id="IPR010999">
    <property type="entry name" value="Retrovr_matrix"/>
</dbReference>
<dbReference type="InterPro" id="IPR001878">
    <property type="entry name" value="Znf_CCHC"/>
</dbReference>
<dbReference type="InterPro" id="IPR036875">
    <property type="entry name" value="Znf_CCHC_sf"/>
</dbReference>
<dbReference type="PANTHER" id="PTHR40389">
    <property type="entry name" value="ENDOGENOUS RETROVIRUS GROUP K MEMBER 24 GAG POLYPROTEIN-RELATED"/>
    <property type="match status" value="1"/>
</dbReference>
<dbReference type="PANTHER" id="PTHR40389:SF2">
    <property type="entry name" value="ENDOGENOUS RETROVIRUS GROUP K MEMBER 24 GAG POLYPROTEIN-RELATED"/>
    <property type="match status" value="1"/>
</dbReference>
<dbReference type="Pfam" id="PF00540">
    <property type="entry name" value="Gag_p17"/>
    <property type="match status" value="1"/>
</dbReference>
<dbReference type="Pfam" id="PF00607">
    <property type="entry name" value="Gag_p24"/>
    <property type="match status" value="1"/>
</dbReference>
<dbReference type="Pfam" id="PF19317">
    <property type="entry name" value="Gag_p24_C"/>
    <property type="match status" value="1"/>
</dbReference>
<dbReference type="Pfam" id="PF00098">
    <property type="entry name" value="zf-CCHC"/>
    <property type="match status" value="2"/>
</dbReference>
<dbReference type="PRINTS" id="PR00234">
    <property type="entry name" value="HIV1MATRIX"/>
</dbReference>
<dbReference type="SMART" id="SM00343">
    <property type="entry name" value="ZnF_C2HC"/>
    <property type="match status" value="2"/>
</dbReference>
<dbReference type="SUPFAM" id="SSF47836">
    <property type="entry name" value="Retroviral matrix proteins"/>
    <property type="match status" value="1"/>
</dbReference>
<dbReference type="SUPFAM" id="SSF47353">
    <property type="entry name" value="Retrovirus capsid dimerization domain-like"/>
    <property type="match status" value="1"/>
</dbReference>
<dbReference type="SUPFAM" id="SSF47943">
    <property type="entry name" value="Retrovirus capsid protein, N-terminal core domain"/>
    <property type="match status" value="1"/>
</dbReference>
<dbReference type="SUPFAM" id="SSF57756">
    <property type="entry name" value="Retrovirus zinc finger-like domains"/>
    <property type="match status" value="1"/>
</dbReference>
<dbReference type="PROSITE" id="PS50158">
    <property type="entry name" value="ZF_CCHC"/>
    <property type="match status" value="2"/>
</dbReference>
<accession>P04590</accession>
<proteinExistence type="evidence at protein level"/>
<sequence>MGARNSVLRGKKADELERIRLRPGGKKKYRLKHIVWAANKLDRFGLAESLLESKEGCQKILTVLDPMVPTGSENLKSLFNTVCVIWCIHAEEKVKDTEGAKQIVRRHLVAETGTAEKMPSTSRPTAPSSEKGGNYPVQHVGGNYTHIPLSPRTLNAWVKLVEEKKFGAEVVPGFQALSEGCTPYDINQMLNCVGDHQAAMQIIREIINEEAAEWDVQHPIPGPLPAGQLREPRGSDIAGTTSTVEEQIQWMFRPQNPVPVGNIYRRWIQIGLQKCVRMYNPTNILDIKQGPKEPFQSYVDRFYKSLRAEQTDPAVKNWMTQTLLVQNANPDCKLVLKGLGMNPTLEEMLTACQGVGGPGQKARLMAEALKEVIGPAPIPFAAAQQRKAFKCWNCGKEGHSARQCRAPRRQGCWKCGKPGHIMTNCPDRQAGFLGLGPWGKKPRNFPVAQVPQGLTPTAPPVDPAVDLLEKYMQQGKRQREQRERPYKEVTEDLLHLEQGETPYREPPTEDLLHLNSLFGKDQ</sequence>
<evidence type="ECO:0000250" key="1"/>
<evidence type="ECO:0000250" key="2">
    <source>
        <dbReference type="UniProtKB" id="P03347"/>
    </source>
</evidence>
<evidence type="ECO:0000250" key="3">
    <source>
        <dbReference type="UniProtKB" id="P03348"/>
    </source>
</evidence>
<evidence type="ECO:0000250" key="4">
    <source>
        <dbReference type="UniProtKB" id="P03349"/>
    </source>
</evidence>
<evidence type="ECO:0000250" key="5">
    <source>
        <dbReference type="UniProtKB" id="P04591"/>
    </source>
</evidence>
<evidence type="ECO:0000250" key="6">
    <source>
        <dbReference type="UniProtKB" id="P12493"/>
    </source>
</evidence>
<evidence type="ECO:0000250" key="7">
    <source>
        <dbReference type="UniProtKB" id="P12497"/>
    </source>
</evidence>
<evidence type="ECO:0000250" key="8">
    <source>
        <dbReference type="UniProtKB" id="P18095"/>
    </source>
</evidence>
<evidence type="ECO:0000255" key="9">
    <source>
        <dbReference type="PROSITE-ProRule" id="PRU00047"/>
    </source>
</evidence>
<evidence type="ECO:0000256" key="10">
    <source>
        <dbReference type="SAM" id="MobiDB-lite"/>
    </source>
</evidence>
<evidence type="ECO:0000305" key="11"/>
<evidence type="ECO:0007829" key="12">
    <source>
        <dbReference type="PDB" id="2WLV"/>
    </source>
</evidence>
<evidence type="ECO:0007829" key="13">
    <source>
        <dbReference type="PDB" id="7TV2"/>
    </source>
</evidence>
<reference key="1">
    <citation type="journal article" date="1987" name="Nature">
        <title>Genome organization and transactivation of the human immunodeficiency virus type 2.</title>
        <authorList>
            <person name="Guyader M."/>
            <person name="Emerman M."/>
            <person name="Sonigo P."/>
            <person name="Clavel F."/>
            <person name="Montagnier L."/>
            <person name="Alizon M."/>
        </authorList>
    </citation>
    <scope>NUCLEOTIDE SEQUENCE [GENOMIC DNA]</scope>
</reference>
<keyword id="KW-0002">3D-structure</keyword>
<keyword id="KW-0014">AIDS</keyword>
<keyword id="KW-0167">Capsid protein</keyword>
<keyword id="KW-1032">Host cell membrane</keyword>
<keyword id="KW-1035">Host cytoplasm</keyword>
<keyword id="KW-1039">Host endosome</keyword>
<keyword id="KW-1043">Host membrane</keyword>
<keyword id="KW-1048">Host nucleus</keyword>
<keyword id="KW-0945">Host-virus interaction</keyword>
<keyword id="KW-0449">Lipoprotein</keyword>
<keyword id="KW-0472">Membrane</keyword>
<keyword id="KW-0479">Metal-binding</keyword>
<keyword id="KW-0519">Myristate</keyword>
<keyword id="KW-0597">Phosphoprotein</keyword>
<keyword id="KW-0677">Repeat</keyword>
<keyword id="KW-0688">Ribosomal frameshifting</keyword>
<keyword id="KW-0694">RNA-binding</keyword>
<keyword id="KW-1198">Viral budding</keyword>
<keyword id="KW-1187">Viral budding via the host ESCRT complexes</keyword>
<keyword id="KW-0543">Viral nucleoprotein</keyword>
<keyword id="KW-1188">Viral release from host cell</keyword>
<keyword id="KW-0946">Virion</keyword>
<keyword id="KW-0862">Zinc</keyword>
<keyword id="KW-0863">Zinc-finger</keyword>
<protein>
    <recommendedName>
        <fullName>Gag polyprotein</fullName>
    </recommendedName>
    <alternativeName>
        <fullName>Pr55Gag</fullName>
    </alternativeName>
    <component>
        <recommendedName>
            <fullName>Matrix protein p17</fullName>
            <shortName>MA</shortName>
        </recommendedName>
    </component>
    <component>
        <recommendedName>
            <fullName>Capsid protein p24</fullName>
            <shortName>CA</shortName>
        </recommendedName>
    </component>
    <component>
        <recommendedName>
            <fullName evidence="6">Spacer peptide 1</fullName>
            <shortName>SP1</shortName>
        </recommendedName>
        <alternativeName>
            <fullName>p2</fullName>
        </alternativeName>
    </component>
    <component>
        <recommendedName>
            <fullName>Nucleocapsid protein p7</fullName>
            <shortName>NC</shortName>
        </recommendedName>
    </component>
    <component>
        <recommendedName>
            <fullName evidence="6">Spacer peptide 2</fullName>
            <shortName>SP2</shortName>
        </recommendedName>
        <alternativeName>
            <fullName>p1</fullName>
        </alternativeName>
    </component>
    <component>
        <recommendedName>
            <fullName>p6-gag</fullName>
        </recommendedName>
    </component>
</protein>
<gene>
    <name type="primary">gag</name>
</gene>
<name>GAG_HV2RO</name>